<dbReference type="EC" id="2.1.1.45" evidence="1"/>
<dbReference type="EMBL" id="Z50165">
    <property type="protein sequence ID" value="CAA90533.1"/>
    <property type="molecule type" value="Genomic_DNA"/>
</dbReference>
<dbReference type="RefSeq" id="WP_003182218.1">
    <property type="nucleotide sequence ID" value="NZ_BEXU01000039.1"/>
</dbReference>
<dbReference type="SMR" id="Q59212"/>
<dbReference type="GeneID" id="92861379"/>
<dbReference type="PATRIC" id="fig|1402.62.peg.3360"/>
<dbReference type="OMA" id="WNEWEVG"/>
<dbReference type="UniPathway" id="UPA00575"/>
<dbReference type="GO" id="GO:0005829">
    <property type="term" value="C:cytosol"/>
    <property type="evidence" value="ECO:0007669"/>
    <property type="project" value="TreeGrafter"/>
</dbReference>
<dbReference type="GO" id="GO:0004799">
    <property type="term" value="F:thymidylate synthase activity"/>
    <property type="evidence" value="ECO:0007669"/>
    <property type="project" value="UniProtKB-UniRule"/>
</dbReference>
<dbReference type="GO" id="GO:0006231">
    <property type="term" value="P:dTMP biosynthetic process"/>
    <property type="evidence" value="ECO:0007669"/>
    <property type="project" value="UniProtKB-UniRule"/>
</dbReference>
<dbReference type="GO" id="GO:0006235">
    <property type="term" value="P:dTTP biosynthetic process"/>
    <property type="evidence" value="ECO:0007669"/>
    <property type="project" value="UniProtKB-UniRule"/>
</dbReference>
<dbReference type="GO" id="GO:0032259">
    <property type="term" value="P:methylation"/>
    <property type="evidence" value="ECO:0007669"/>
    <property type="project" value="UniProtKB-KW"/>
</dbReference>
<dbReference type="CDD" id="cd00351">
    <property type="entry name" value="TS_Pyrimidine_HMase"/>
    <property type="match status" value="1"/>
</dbReference>
<dbReference type="FunFam" id="3.30.572.10:FF:000010">
    <property type="entry name" value="Thymidylate synthase 1"/>
    <property type="match status" value="1"/>
</dbReference>
<dbReference type="Gene3D" id="3.30.572.10">
    <property type="entry name" value="Thymidylate synthase/dCMP hydroxymethylase domain"/>
    <property type="match status" value="1"/>
</dbReference>
<dbReference type="HAMAP" id="MF_00008">
    <property type="entry name" value="Thymidy_synth_bact"/>
    <property type="match status" value="1"/>
</dbReference>
<dbReference type="InterPro" id="IPR045097">
    <property type="entry name" value="Thymidate_synth/dCMP_Mease"/>
</dbReference>
<dbReference type="InterPro" id="IPR023451">
    <property type="entry name" value="Thymidate_synth/dCMP_Mease_dom"/>
</dbReference>
<dbReference type="InterPro" id="IPR036926">
    <property type="entry name" value="Thymidate_synth/dCMP_Mease_sf"/>
</dbReference>
<dbReference type="InterPro" id="IPR000398">
    <property type="entry name" value="Thymidylate_synthase"/>
</dbReference>
<dbReference type="InterPro" id="IPR020940">
    <property type="entry name" value="Thymidylate_synthase_AS"/>
</dbReference>
<dbReference type="NCBIfam" id="NF002495">
    <property type="entry name" value="PRK01827.1-1"/>
    <property type="match status" value="1"/>
</dbReference>
<dbReference type="NCBIfam" id="TIGR03284">
    <property type="entry name" value="thym_sym"/>
    <property type="match status" value="1"/>
</dbReference>
<dbReference type="PANTHER" id="PTHR11548">
    <property type="entry name" value="THYMIDYLATE SYNTHASE 1"/>
    <property type="match status" value="1"/>
</dbReference>
<dbReference type="PANTHER" id="PTHR11548:SF1">
    <property type="entry name" value="THYMIDYLATE SYNTHASE 1"/>
    <property type="match status" value="1"/>
</dbReference>
<dbReference type="Pfam" id="PF00303">
    <property type="entry name" value="Thymidylat_synt"/>
    <property type="match status" value="1"/>
</dbReference>
<dbReference type="PRINTS" id="PR00108">
    <property type="entry name" value="THYMDSNTHASE"/>
</dbReference>
<dbReference type="SUPFAM" id="SSF55831">
    <property type="entry name" value="Thymidylate synthase/dCMP hydroxymethylase"/>
    <property type="match status" value="1"/>
</dbReference>
<dbReference type="PROSITE" id="PS00091">
    <property type="entry name" value="THYMIDYLATE_SYNTHASE"/>
    <property type="match status" value="1"/>
</dbReference>
<feature type="chain" id="PRO_0000140927" description="Thymidylate synthase">
    <location>
        <begin position="1"/>
        <end position="279"/>
    </location>
</feature>
<feature type="active site" description="Nucleophile" evidence="1">
    <location>
        <position position="161"/>
    </location>
</feature>
<feature type="binding site" evidence="1">
    <location>
        <begin position="141"/>
        <end position="142"/>
    </location>
    <ligand>
        <name>dUMP</name>
        <dbReference type="ChEBI" id="CHEBI:246422"/>
        <note>ligand shared between dimeric partners</note>
    </ligand>
</feature>
<feature type="binding site" description="in other chain" evidence="1">
    <location>
        <begin position="181"/>
        <end position="184"/>
    </location>
    <ligand>
        <name>dUMP</name>
        <dbReference type="ChEBI" id="CHEBI:246422"/>
        <note>ligand shared between dimeric partners</note>
    </ligand>
</feature>
<feature type="binding site" evidence="1">
    <location>
        <position position="184"/>
    </location>
    <ligand>
        <name>(6R)-5,10-methylene-5,6,7,8-tetrahydrofolate</name>
        <dbReference type="ChEBI" id="CHEBI:15636"/>
    </ligand>
</feature>
<feature type="binding site" description="in other chain" evidence="1">
    <location>
        <position position="192"/>
    </location>
    <ligand>
        <name>dUMP</name>
        <dbReference type="ChEBI" id="CHEBI:246422"/>
        <note>ligand shared between dimeric partners</note>
    </ligand>
</feature>
<feature type="binding site" description="in other chain" evidence="1">
    <location>
        <begin position="222"/>
        <end position="224"/>
    </location>
    <ligand>
        <name>dUMP</name>
        <dbReference type="ChEBI" id="CHEBI:246422"/>
        <note>ligand shared between dimeric partners</note>
    </ligand>
</feature>
<feature type="binding site" evidence="1">
    <location>
        <position position="278"/>
    </location>
    <ligand>
        <name>(6R)-5,10-methylene-5,6,7,8-tetrahydrofolate</name>
        <dbReference type="ChEBI" id="CHEBI:15636"/>
    </ligand>
</feature>
<name>TYSY_BACLI</name>
<comment type="function">
    <text evidence="1">Catalyzes the reductive methylation of 2'-deoxyuridine-5'-monophosphate (dUMP) to 2'-deoxythymidine-5'-monophosphate (dTMP) while utilizing 5,10-methylenetetrahydrofolate (mTHF) as the methyl donor and reductant in the reaction, yielding dihydrofolate (DHF) as a by-product. This enzymatic reaction provides an intracellular de novo source of dTMP, an essential precursor for DNA biosynthesis.</text>
</comment>
<comment type="catalytic activity">
    <reaction evidence="1">
        <text>dUMP + (6R)-5,10-methylene-5,6,7,8-tetrahydrofolate = 7,8-dihydrofolate + dTMP</text>
        <dbReference type="Rhea" id="RHEA:12104"/>
        <dbReference type="ChEBI" id="CHEBI:15636"/>
        <dbReference type="ChEBI" id="CHEBI:57451"/>
        <dbReference type="ChEBI" id="CHEBI:63528"/>
        <dbReference type="ChEBI" id="CHEBI:246422"/>
        <dbReference type="EC" id="2.1.1.45"/>
    </reaction>
</comment>
<comment type="pathway">
    <text evidence="1">Pyrimidine metabolism; dTTP biosynthesis.</text>
</comment>
<comment type="subunit">
    <text evidence="1">Homodimer.</text>
</comment>
<comment type="subcellular location">
    <subcellularLocation>
        <location evidence="1">Cytoplasm</location>
    </subcellularLocation>
</comment>
<comment type="similarity">
    <text evidence="1">Belongs to the thymidylate synthase family. Bacterial-type ThyA subfamily.</text>
</comment>
<organism>
    <name type="scientific">Bacillus licheniformis</name>
    <dbReference type="NCBI Taxonomy" id="1402"/>
    <lineage>
        <taxon>Bacteria</taxon>
        <taxon>Bacillati</taxon>
        <taxon>Bacillota</taxon>
        <taxon>Bacilli</taxon>
        <taxon>Bacillales</taxon>
        <taxon>Bacillaceae</taxon>
        <taxon>Bacillus</taxon>
    </lineage>
</organism>
<sequence length="279" mass="32760">MSHYDQQYNAIIQKIIESGISDEEYQVRTKWDSDGTPAHTLSIMSEKMRFDNSEVPILTTKKVAWKTAIKELLWIWQLKSNDVQVLNDMGVHIWDQWRLEDGTIGAAYGYQLGKKNRTVNGQKVDQVDYLLHQLKHNPSSRRHLTMLWNPDDLDGMALTPCVYETQWYVKEGKLSLEVRARSNDMALGNPFNVFQYNVLQRMIAQVLGYELGEYIFNIGDCHIYTRHIDNLNIQMKREQYEAPKLWINPDIKNFYDFTIDDFKLIDYKHGDKLTFEVAV</sequence>
<proteinExistence type="inferred from homology"/>
<reference key="1">
    <citation type="submission" date="1995-07" db="EMBL/GenBank/DDBJ databases">
        <title>Cloning of the Bacillus thymidylate synthase genes thyBA and thyBL.</title>
        <authorList>
            <person name="Steinborn G."/>
            <person name="Richter K."/>
        </authorList>
    </citation>
    <scope>NUCLEOTIDE SEQUENCE [GENOMIC DNA]</scope>
    <source>
        <strain>ATCC 9789 / DSM 8785 / NBRC 12195 / NCIMB 6346 / NCTC 6346 / IMET 11025 / NRS 243</strain>
    </source>
</reference>
<protein>
    <recommendedName>
        <fullName evidence="1">Thymidylate synthase</fullName>
        <shortName evidence="1">TS</shortName>
        <shortName evidence="1">TSase</shortName>
        <ecNumber evidence="1">2.1.1.45</ecNumber>
    </recommendedName>
</protein>
<accession>Q59212</accession>
<evidence type="ECO:0000255" key="1">
    <source>
        <dbReference type="HAMAP-Rule" id="MF_00008"/>
    </source>
</evidence>
<keyword id="KW-0963">Cytoplasm</keyword>
<keyword id="KW-0489">Methyltransferase</keyword>
<keyword id="KW-0545">Nucleotide biosynthesis</keyword>
<keyword id="KW-0808">Transferase</keyword>
<gene>
    <name evidence="1" type="primary">thyA</name>
    <name type="synonym">thyBL</name>
</gene>